<accession>A0A1W6BT46</accession>
<reference key="1">
    <citation type="journal article" date="2018" name="Chem. Sci.">
        <title>Asperphenamate biosynthesis reveals a novel two-module NRPS system to synthesize amino acid esters in fungi.</title>
        <authorList>
            <person name="Li W."/>
            <person name="Fan A."/>
            <person name="Wang L."/>
            <person name="Zhang P."/>
            <person name="Liu Z."/>
            <person name="An Z."/>
            <person name="Yin W.B."/>
        </authorList>
    </citation>
    <scope>NUCLEOTIDE SEQUENCE [GENOMIC DNA]</scope>
    <scope>IDENTIFICATION</scope>
    <scope>DISRUPTION PHENOTYPE</scope>
    <scope>FUNCTION</scope>
    <scope>CATALYTIC ACTIVITY</scope>
    <scope>DOMAIN</scope>
    <scope>PATHWAY</scope>
</reference>
<sequence>MLQVVPGSLDTAPCAFPTENLPGRGFQSIPLDLSSSGAIASEVLLRSWAVVLRYYVGSDMIAFGRIDDTDPASQFAVCHGDIPATATLEELKASSLSGNPNSLPLSEWIASNTFNTIVWNGTSFPLEKLETTSCSLALLVSDTPSLAFASHAIGENVAAAVAEGVAHVADIITNQPQTTIGAVDLFGAVSWSQLQEWNSTVPNMIEVCMHDLIDTQAKSRPDSTALDCWDGSVSYAQLVDYTSRLGSFLVTQNVGPEVFVPVCFDKSLWAVVSMIGVMKAGGAFVCIDPAQPVDRLETIISEVNAQVALGAPAYREALAGLVPNAIAIDADFILSLPPSTELPRVLPKDAAFAIFTSGSTGKPKGIVHEHRTMCSSARRHAAALNINSTTRTFQFAAYTFIVNTFELFTPLVEGGCVCVPSKEDRLGRTTGAMRDLNANWACLTPSFLRSIKPEDVPQLKTLLLAGEPVQQDNLDTWRHRVKMLNMYGASEASICVAGDLSGPVGRSTIGVGAGCTTWVVDPIDHDRLAPLGAIGELVIEGPILAREYIHQPEKTAEVFISNTPWMEEIRGALPSRAYKTGDLVRYGTDGRINLVGRKDMQIKLRGQRVELEEVEFHLRQLIPRGTEVAVGLVKPVDQPDRPMLAIFASLTKAFGENFSPVNEDLAADIESRMAGWKDKLGDSVPGYMVPSTVVKLNHMPLTASGKTNRKAIGDFACTLTIAALTGAAKKEHKEPATATGKVLRGIWADVLSLKEESISSDDSFLQLGGNSIDAMKLVNLTRDVQLGLSVAKIFTYPVLDEMADACTKVIVQSFEDVPFGLITGKTDSLIQEAALQCQVGPLAIEDLYPCTAMQEGLMALSDSREGAYVAQHSLSLGPSIDLNRFKKACQKVVDAHPILRTCIVYPEQSRALQAVVQGEIEWHTAEDLETYAKEDKARPMCAGQLLTRYGLVPDGEGWTFVWTVHHAVYDAWTLELTFDRLDKAYKGHPLERDTTFKEFIQHMVTTDESESDNFWREYLAGATRNEFPSAVSTSKQPVADSSVKYSMSLIRTDGLSGITVASMIRAAWGILIGSHSESDDVVFGGIVSGRNAPIANADKLFGPGIAAVPVRVKFPDNDTLTIREFIGDVQDQSTKMISFEQAGLQNIRRVSSDATAACDFQTLLVVQPHKEKHLSTEEIDLRAASEADANFGTYALTLECSLKSDGVVCSAHYDSSLVSKESVERILGQLENLLHQMCSSSADKKLNELIFISSKDQESIRGWNRHIPKPIHKTIHQMIAERIAERPDHEAVCSWDGSLTYAELDQHASRLARRLAQLDVQPESFVPCCFEKSTWAIPAMLGVLRAGGAFLNLDPSQPANRIQLMIRKLKSKTIVCSPSQYDLCRSMGEEYNIVVFDTQSPEESLPDMPPVDVKPENAAYVIFTSGSTGEPKGTIIQHGHYAIGSVTHAPAMLIDGNTRALQFASFTFDASLVETITILITGGCICVASEEQRKRDVAEAVRATRANWAALTPSFVNLLSPDDVPSIKVLILAGEAMSQSHIDTWGKRLRLVNGYGPSECCVASTSTIDVVPGVSPRNIGFTCSGASWVVMPTNHHRLMPVGSVGELVLEGWNVGRGYLDEPAKTEAAFVENPLWMDLGDEMRAPVVYKTGDLVRYNADGSLDFQRRKDTQVKLRGQRVELGEIEYRITQSLPNKPHAVVDIVCPKDAPDQPRLVAFIQVPASEARRKPTSIFMLNQPESMIPEPNERHVSSLSGLEDRLSDFLPMHMIPSAYIPVYHIPKMPSGKADRKTLIRIGSGLTHRRMAEYSGATEDARPPTTDMQITMQELWGETLKMPAAQINLNDNFLRLGGDSITAMRLASAARAKGIPLSTATIFQHPTLEAISAVAETLSHQQRPQSFEPFSTLKSIPKDQLIDDIIIPQLGVPAFQIQDALESTDFQSLAINGGLNQTRGWSNYLIFDFEGPIDLRRLQVACEQLVAHHAVLRTVFLSTGSELIQVILRSVAPEYSIHIQDEEDPTESLIREDLARPPHLGEAIVRFMLVKDDATHHRLIMRISHAQYDGSSMPHLMHDLRVAYRGEELPKRAQFSDFVRTQLHTSDGSKSFYKDMLSGSQMTSVVSHTKSSVTNVLNTMLAEMVPLVAFKDHGITAATVVKAAWALVLADMAATADVVYGHMVSGRNLPLDGVESMMGPCLNIVPVRANMNSMHTILDLLRHIQQQQTDTIPHESLGFQQIIDQCTDWTPATRFSSVFQYQDFGGEEAAPGQPVSFESVLKCTPGFVCPAPDACDMSLLATPVARVDLPRRPSPAGDTRDGPTAASDSPSRAR</sequence>
<gene>
    <name evidence="5" type="primary">apmB</name>
</gene>
<dbReference type="EC" id="6.3.2.-" evidence="4"/>
<dbReference type="EMBL" id="KX443596">
    <property type="protein sequence ID" value="ARJ55263.1"/>
    <property type="molecule type" value="Genomic_DNA"/>
</dbReference>
<dbReference type="SMR" id="A0A1W6BT46"/>
<dbReference type="GO" id="GO:0005737">
    <property type="term" value="C:cytoplasm"/>
    <property type="evidence" value="ECO:0007669"/>
    <property type="project" value="TreeGrafter"/>
</dbReference>
<dbReference type="GO" id="GO:0016874">
    <property type="term" value="F:ligase activity"/>
    <property type="evidence" value="ECO:0007669"/>
    <property type="project" value="UniProtKB-KW"/>
</dbReference>
<dbReference type="GO" id="GO:0031177">
    <property type="term" value="F:phosphopantetheine binding"/>
    <property type="evidence" value="ECO:0007669"/>
    <property type="project" value="InterPro"/>
</dbReference>
<dbReference type="GO" id="GO:0043041">
    <property type="term" value="P:amino acid activation for nonribosomal peptide biosynthetic process"/>
    <property type="evidence" value="ECO:0007669"/>
    <property type="project" value="TreeGrafter"/>
</dbReference>
<dbReference type="GO" id="GO:0044550">
    <property type="term" value="P:secondary metabolite biosynthetic process"/>
    <property type="evidence" value="ECO:0007669"/>
    <property type="project" value="TreeGrafter"/>
</dbReference>
<dbReference type="CDD" id="cd05918">
    <property type="entry name" value="A_NRPS_SidN3_like"/>
    <property type="match status" value="2"/>
</dbReference>
<dbReference type="CDD" id="cd19542">
    <property type="entry name" value="CT_NRPS-like"/>
    <property type="match status" value="1"/>
</dbReference>
<dbReference type="CDD" id="cd19545">
    <property type="entry name" value="FUM14_C_NRPS-like"/>
    <property type="match status" value="1"/>
</dbReference>
<dbReference type="FunFam" id="3.40.50.980:FF:000001">
    <property type="entry name" value="Non-ribosomal peptide synthetase"/>
    <property type="match status" value="1"/>
</dbReference>
<dbReference type="FunFam" id="3.30.300.30:FF:000015">
    <property type="entry name" value="Nonribosomal peptide synthase SidD"/>
    <property type="match status" value="2"/>
</dbReference>
<dbReference type="FunFam" id="3.30.559.30:FF:000003">
    <property type="entry name" value="Nonribosomal peptide synthase SidD"/>
    <property type="match status" value="1"/>
</dbReference>
<dbReference type="FunFam" id="1.10.1200.10:FF:000005">
    <property type="entry name" value="Nonribosomal peptide synthetase 1"/>
    <property type="match status" value="1"/>
</dbReference>
<dbReference type="FunFam" id="3.40.50.12780:FF:000014">
    <property type="entry name" value="Nonribosomal peptide synthetase 1"/>
    <property type="match status" value="2"/>
</dbReference>
<dbReference type="Gene3D" id="3.30.300.30">
    <property type="match status" value="2"/>
</dbReference>
<dbReference type="Gene3D" id="3.40.50.980">
    <property type="match status" value="2"/>
</dbReference>
<dbReference type="Gene3D" id="1.10.1200.10">
    <property type="entry name" value="ACP-like"/>
    <property type="match status" value="2"/>
</dbReference>
<dbReference type="Gene3D" id="3.30.559.10">
    <property type="entry name" value="Chloramphenicol acetyltransferase-like domain"/>
    <property type="match status" value="2"/>
</dbReference>
<dbReference type="Gene3D" id="2.30.38.10">
    <property type="entry name" value="Luciferase, Domain 3"/>
    <property type="match status" value="1"/>
</dbReference>
<dbReference type="Gene3D" id="3.40.50.12780">
    <property type="entry name" value="N-terminal domain of ligase-like"/>
    <property type="match status" value="1"/>
</dbReference>
<dbReference type="Gene3D" id="3.30.559.30">
    <property type="entry name" value="Nonribosomal peptide synthetase, condensation domain"/>
    <property type="match status" value="2"/>
</dbReference>
<dbReference type="InterPro" id="IPR010071">
    <property type="entry name" value="AA_adenyl_dom"/>
</dbReference>
<dbReference type="InterPro" id="IPR036736">
    <property type="entry name" value="ACP-like_sf"/>
</dbReference>
<dbReference type="InterPro" id="IPR045851">
    <property type="entry name" value="AMP-bd_C_sf"/>
</dbReference>
<dbReference type="InterPro" id="IPR020845">
    <property type="entry name" value="AMP-binding_CS"/>
</dbReference>
<dbReference type="InterPro" id="IPR000873">
    <property type="entry name" value="AMP-dep_synth/lig_dom"/>
</dbReference>
<dbReference type="InterPro" id="IPR042099">
    <property type="entry name" value="ANL_N_sf"/>
</dbReference>
<dbReference type="InterPro" id="IPR023213">
    <property type="entry name" value="CAT-like_dom_sf"/>
</dbReference>
<dbReference type="InterPro" id="IPR001242">
    <property type="entry name" value="Condensatn"/>
</dbReference>
<dbReference type="InterPro" id="IPR020806">
    <property type="entry name" value="PKS_PP-bd"/>
</dbReference>
<dbReference type="InterPro" id="IPR009081">
    <property type="entry name" value="PP-bd_ACP"/>
</dbReference>
<dbReference type="InterPro" id="IPR006162">
    <property type="entry name" value="Ppantetheine_attach_site"/>
</dbReference>
<dbReference type="NCBIfam" id="TIGR01733">
    <property type="entry name" value="AA-adenyl-dom"/>
    <property type="match status" value="2"/>
</dbReference>
<dbReference type="PANTHER" id="PTHR45527:SF1">
    <property type="entry name" value="FATTY ACID SYNTHASE"/>
    <property type="match status" value="1"/>
</dbReference>
<dbReference type="PANTHER" id="PTHR45527">
    <property type="entry name" value="NONRIBOSOMAL PEPTIDE SYNTHETASE"/>
    <property type="match status" value="1"/>
</dbReference>
<dbReference type="Pfam" id="PF00501">
    <property type="entry name" value="AMP-binding"/>
    <property type="match status" value="2"/>
</dbReference>
<dbReference type="Pfam" id="PF00668">
    <property type="entry name" value="Condensation"/>
    <property type="match status" value="2"/>
</dbReference>
<dbReference type="Pfam" id="PF00550">
    <property type="entry name" value="PP-binding"/>
    <property type="match status" value="2"/>
</dbReference>
<dbReference type="SMART" id="SM00823">
    <property type="entry name" value="PKS_PP"/>
    <property type="match status" value="2"/>
</dbReference>
<dbReference type="SUPFAM" id="SSF56801">
    <property type="entry name" value="Acetyl-CoA synthetase-like"/>
    <property type="match status" value="2"/>
</dbReference>
<dbReference type="SUPFAM" id="SSF47336">
    <property type="entry name" value="ACP-like"/>
    <property type="match status" value="2"/>
</dbReference>
<dbReference type="SUPFAM" id="SSF52777">
    <property type="entry name" value="CoA-dependent acyltransferases"/>
    <property type="match status" value="4"/>
</dbReference>
<dbReference type="PROSITE" id="PS00455">
    <property type="entry name" value="AMP_BINDING"/>
    <property type="match status" value="1"/>
</dbReference>
<dbReference type="PROSITE" id="PS50075">
    <property type="entry name" value="CARRIER"/>
    <property type="match status" value="2"/>
</dbReference>
<dbReference type="PROSITE" id="PS00012">
    <property type="entry name" value="PHOSPHOPANTETHEINE"/>
    <property type="match status" value="1"/>
</dbReference>
<organism>
    <name type="scientific">Penicillium brevicompactum</name>
    <dbReference type="NCBI Taxonomy" id="5074"/>
    <lineage>
        <taxon>Eukaryota</taxon>
        <taxon>Fungi</taxon>
        <taxon>Dikarya</taxon>
        <taxon>Ascomycota</taxon>
        <taxon>Pezizomycotina</taxon>
        <taxon>Eurotiomycetes</taxon>
        <taxon>Eurotiomycetidae</taxon>
        <taxon>Eurotiales</taxon>
        <taxon>Aspergillaceae</taxon>
        <taxon>Penicillium</taxon>
    </lineage>
</organism>
<feature type="chain" id="PRO_0000448647" description="Nonribosomal peptide synthetase apmB">
    <location>
        <begin position="1"/>
        <end position="2327"/>
    </location>
</feature>
<feature type="domain" description="Carrier 1" evidence="2">
    <location>
        <begin position="734"/>
        <end position="810"/>
    </location>
</feature>
<feature type="domain" description="Carrier 2" evidence="2">
    <location>
        <begin position="1816"/>
        <end position="1892"/>
    </location>
</feature>
<feature type="region of interest" description="Adenylation 1" evidence="1 7">
    <location>
        <begin position="214"/>
        <end position="605"/>
    </location>
</feature>
<feature type="region of interest" description="Condensation 1" evidence="1 7">
    <location>
        <begin position="845"/>
        <end position="1259"/>
    </location>
</feature>
<feature type="region of interest" description="Adenylation 2" evidence="1 7">
    <location>
        <begin position="1281"/>
        <end position="1675"/>
    </location>
</feature>
<feature type="region of interest" description="Condensation 2" evidence="1 7">
    <location>
        <begin position="1937"/>
        <end position="2260"/>
    </location>
</feature>
<feature type="region of interest" description="Disordered" evidence="3">
    <location>
        <begin position="2299"/>
        <end position="2327"/>
    </location>
</feature>
<feature type="modified residue" description="O-(pantetheine 4'-phosphoryl)serine" evidence="2">
    <location>
        <position position="771"/>
    </location>
</feature>
<feature type="modified residue" description="O-(pantetheine 4'-phosphoryl)serine" evidence="2">
    <location>
        <position position="1853"/>
    </location>
</feature>
<keyword id="KW-0436">Ligase</keyword>
<keyword id="KW-0596">Phosphopantetheine</keyword>
<keyword id="KW-0597">Phosphoprotein</keyword>
<keyword id="KW-0677">Repeat</keyword>
<comment type="function">
    <text evidence="4">Nonribosomal peptide synthetase; part of the gene cluster that mediates the biosynthesis of asperphenamate, a rare linear amino acid ester that exhibits antitumor activity towards a number of cell lines (PubMed:29719714). The structure of asperphenamate contains two subunits, N-benzoylphenylalanine and N-benzoylphenylalaninol, which are connected by an inter-molecular ester bond (PubMed:29719714). The first step of asperphenamate biosynthesis is the generation of N-benzoylphenylalaninol by the nonribosomal peptide synthase apmA (PubMed:29719714). Using phenylalanine and benzoic acid as substrates, apmA catalyzes amide bond formation and tethers the intermediate into the NRPS chain. Then, the terminal R domain of apmA catalyzes the reduction reaction to get the shunt product N-benzoylphenylalaninol (PubMed:29719714). Subsequently, the nonribosomal peptide synthase apmB activates the same substrates as does apmA (phenylalanine and benzoic acid) to produce N-benzoylphenylalanine before condensing N-benzoylphenylalanine and N-benzoylphenylalaninol to release asperphenamate (PubMed:29719714).</text>
</comment>
<comment type="catalytic activity">
    <reaction evidence="4">
        <text>N-benzoyl-L-phenylalaninol + benzoate + L-phenylalanine + 2 ATP = asperphenamate + 2 AMP + 2 diphosphate + H(+)</text>
        <dbReference type="Rhea" id="RHEA:61908"/>
        <dbReference type="ChEBI" id="CHEBI:15378"/>
        <dbReference type="ChEBI" id="CHEBI:16150"/>
        <dbReference type="ChEBI" id="CHEBI:30616"/>
        <dbReference type="ChEBI" id="CHEBI:33019"/>
        <dbReference type="ChEBI" id="CHEBI:58095"/>
        <dbReference type="ChEBI" id="CHEBI:145105"/>
        <dbReference type="ChEBI" id="CHEBI:145107"/>
        <dbReference type="ChEBI" id="CHEBI:456215"/>
    </reaction>
    <physiologicalReaction direction="left-to-right" evidence="4">
        <dbReference type="Rhea" id="RHEA:61909"/>
    </physiologicalReaction>
</comment>
<comment type="pathway">
    <text evidence="4">Secondary metabolite biosynthesis.</text>
</comment>
<comment type="domain">
    <text evidence="7">NRP synthetases are composed of discrete domains (adenylation (A), thiolation (T) or peptidyl carrier protein (PCP) and condensation (C) domains) which when grouped together are referred to as a single module. Each module is responsible for the recognition (via the A domain) and incorporation of a single amino acid into the growing peptide product. Thus, an NRP synthetase is generally composed of one or more modules and can terminate in a thioesterase domain (TE) that releases the newly synthesized peptide from the enzyme. Occasionally, methyltransferase domains (responsible for amino acid methylation) are present within the NRP synthetase. ApmB has the following architecture: A-T-C-A-T-C.</text>
</comment>
<comment type="disruption phenotype">
    <text evidence="4">Completely abolishes the production of asperphenamate and leads to the accumulation of N-benzoylphenylalaninol.</text>
</comment>
<comment type="similarity">
    <text evidence="6">Belongs to the NRP synthetase family.</text>
</comment>
<proteinExistence type="evidence at protein level"/>
<name>APMB_PENBR</name>
<evidence type="ECO:0000255" key="1"/>
<evidence type="ECO:0000255" key="2">
    <source>
        <dbReference type="PROSITE-ProRule" id="PRU00258"/>
    </source>
</evidence>
<evidence type="ECO:0000256" key="3">
    <source>
        <dbReference type="SAM" id="MobiDB-lite"/>
    </source>
</evidence>
<evidence type="ECO:0000269" key="4">
    <source>
    </source>
</evidence>
<evidence type="ECO:0000303" key="5">
    <source>
    </source>
</evidence>
<evidence type="ECO:0000305" key="6"/>
<evidence type="ECO:0000305" key="7">
    <source>
    </source>
</evidence>
<protein>
    <recommendedName>
        <fullName evidence="5">Nonribosomal peptide synthetase apmB</fullName>
        <ecNumber evidence="4">6.3.2.-</ecNumber>
    </recommendedName>
    <alternativeName>
        <fullName evidence="5">Asperphenamate biosynthesis cluster protein B</fullName>
    </alternativeName>
</protein>